<name>YEEN_SHISS</name>
<sequence>MGRKWANIVAKKTAKDGATSKIYAKFGVEIYAAAKQGEPDPELNTSLKFVIERAKQAQVPKHVIDKAIDKAKGGGDETFVQGRYEGFGPNGSMIIAETLTSNVNRTIANVRTIFNKKGGNIGAAGSVSYMFDNAGVIVFKGSDPDHIFEILLEAEVDVRDVTEEEGNIVIYTEPTDLHKGIAALKAAGITEFSTTELEMIAQSEVELSPEDLEIFEGLVDALEDDDDVQKVYHNVANL</sequence>
<dbReference type="EMBL" id="CP000038">
    <property type="protein sequence ID" value="AAZ88704.1"/>
    <property type="molecule type" value="Genomic_DNA"/>
</dbReference>
<dbReference type="RefSeq" id="WP_000532907.1">
    <property type="nucleotide sequence ID" value="NC_007384.1"/>
</dbReference>
<dbReference type="SMR" id="Q3Z0K8"/>
<dbReference type="KEGG" id="ssn:SSON_2046"/>
<dbReference type="HOGENOM" id="CLU_062974_2_0_6"/>
<dbReference type="Proteomes" id="UP000002529">
    <property type="component" value="Chromosome"/>
</dbReference>
<dbReference type="GO" id="GO:0005829">
    <property type="term" value="C:cytosol"/>
    <property type="evidence" value="ECO:0007669"/>
    <property type="project" value="TreeGrafter"/>
</dbReference>
<dbReference type="GO" id="GO:0003677">
    <property type="term" value="F:DNA binding"/>
    <property type="evidence" value="ECO:0007669"/>
    <property type="project" value="UniProtKB-UniRule"/>
</dbReference>
<dbReference type="GO" id="GO:0006355">
    <property type="term" value="P:regulation of DNA-templated transcription"/>
    <property type="evidence" value="ECO:0007669"/>
    <property type="project" value="UniProtKB-UniRule"/>
</dbReference>
<dbReference type="FunFam" id="1.10.10.200:FF:000003">
    <property type="entry name" value="Probable transcriptional regulatory protein YeeN"/>
    <property type="match status" value="1"/>
</dbReference>
<dbReference type="FunFam" id="3.30.70.980:FF:000004">
    <property type="entry name" value="Probable transcriptional regulatory protein YeeN"/>
    <property type="match status" value="1"/>
</dbReference>
<dbReference type="Gene3D" id="1.10.10.200">
    <property type="match status" value="1"/>
</dbReference>
<dbReference type="Gene3D" id="3.30.70.980">
    <property type="match status" value="2"/>
</dbReference>
<dbReference type="HAMAP" id="MF_00693">
    <property type="entry name" value="Transcrip_reg_TACO1"/>
    <property type="match status" value="1"/>
</dbReference>
<dbReference type="HAMAP" id="MF_00918">
    <property type="entry name" value="Transcrip_reg_TACO1_YeeN"/>
    <property type="match status" value="1"/>
</dbReference>
<dbReference type="InterPro" id="IPR017856">
    <property type="entry name" value="Integrase-like_N"/>
</dbReference>
<dbReference type="InterPro" id="IPR048300">
    <property type="entry name" value="TACO1_YebC-like_2nd/3rd_dom"/>
</dbReference>
<dbReference type="InterPro" id="IPR049083">
    <property type="entry name" value="TACO1_YebC_N"/>
</dbReference>
<dbReference type="InterPro" id="IPR002876">
    <property type="entry name" value="Transcrip_reg_TACO1-like"/>
</dbReference>
<dbReference type="InterPro" id="IPR026564">
    <property type="entry name" value="Transcrip_reg_TACO1-like_dom3"/>
</dbReference>
<dbReference type="InterPro" id="IPR026562">
    <property type="entry name" value="Transcrip_reg_TACO1_YeeN"/>
</dbReference>
<dbReference type="InterPro" id="IPR029072">
    <property type="entry name" value="YebC-like"/>
</dbReference>
<dbReference type="NCBIfam" id="NF009044">
    <property type="entry name" value="PRK12378.1"/>
    <property type="match status" value="1"/>
</dbReference>
<dbReference type="NCBIfam" id="TIGR01033">
    <property type="entry name" value="YebC/PmpR family DNA-binding transcriptional regulator"/>
    <property type="match status" value="1"/>
</dbReference>
<dbReference type="PANTHER" id="PTHR12532">
    <property type="entry name" value="TRANSLATIONAL ACTIVATOR OF CYTOCHROME C OXIDASE 1"/>
    <property type="match status" value="1"/>
</dbReference>
<dbReference type="PANTHER" id="PTHR12532:SF0">
    <property type="entry name" value="TRANSLATIONAL ACTIVATOR OF CYTOCHROME C OXIDASE 1"/>
    <property type="match status" value="1"/>
</dbReference>
<dbReference type="Pfam" id="PF20772">
    <property type="entry name" value="TACO1_YebC_N"/>
    <property type="match status" value="1"/>
</dbReference>
<dbReference type="Pfam" id="PF01709">
    <property type="entry name" value="Transcrip_reg"/>
    <property type="match status" value="1"/>
</dbReference>
<dbReference type="SUPFAM" id="SSF75625">
    <property type="entry name" value="YebC-like"/>
    <property type="match status" value="1"/>
</dbReference>
<protein>
    <recommendedName>
        <fullName evidence="1">Probable transcriptional regulatory protein YeeN</fullName>
    </recommendedName>
</protein>
<reference key="1">
    <citation type="journal article" date="2005" name="Nucleic Acids Res.">
        <title>Genome dynamics and diversity of Shigella species, the etiologic agents of bacillary dysentery.</title>
        <authorList>
            <person name="Yang F."/>
            <person name="Yang J."/>
            <person name="Zhang X."/>
            <person name="Chen L."/>
            <person name="Jiang Y."/>
            <person name="Yan Y."/>
            <person name="Tang X."/>
            <person name="Wang J."/>
            <person name="Xiong Z."/>
            <person name="Dong J."/>
            <person name="Xue Y."/>
            <person name="Zhu Y."/>
            <person name="Xu X."/>
            <person name="Sun L."/>
            <person name="Chen S."/>
            <person name="Nie H."/>
            <person name="Peng J."/>
            <person name="Xu J."/>
            <person name="Wang Y."/>
            <person name="Yuan Z."/>
            <person name="Wen Y."/>
            <person name="Yao Z."/>
            <person name="Shen Y."/>
            <person name="Qiang B."/>
            <person name="Hou Y."/>
            <person name="Yu J."/>
            <person name="Jin Q."/>
        </authorList>
    </citation>
    <scope>NUCLEOTIDE SEQUENCE [LARGE SCALE GENOMIC DNA]</scope>
    <source>
        <strain>Ss046</strain>
    </source>
</reference>
<accession>Q3Z0K8</accession>
<evidence type="ECO:0000255" key="1">
    <source>
        <dbReference type="HAMAP-Rule" id="MF_00918"/>
    </source>
</evidence>
<keyword id="KW-0963">Cytoplasm</keyword>
<keyword id="KW-0238">DNA-binding</keyword>
<keyword id="KW-1185">Reference proteome</keyword>
<keyword id="KW-0804">Transcription</keyword>
<keyword id="KW-0805">Transcription regulation</keyword>
<comment type="subcellular location">
    <subcellularLocation>
        <location evidence="1">Cytoplasm</location>
    </subcellularLocation>
</comment>
<comment type="similarity">
    <text evidence="1">Belongs to the TACO1 family. YeeN subfamily.</text>
</comment>
<feature type="chain" id="PRO_0000257132" description="Probable transcriptional regulatory protein YeeN">
    <location>
        <begin position="1"/>
        <end position="238"/>
    </location>
</feature>
<proteinExistence type="inferred from homology"/>
<organism>
    <name type="scientific">Shigella sonnei (strain Ss046)</name>
    <dbReference type="NCBI Taxonomy" id="300269"/>
    <lineage>
        <taxon>Bacteria</taxon>
        <taxon>Pseudomonadati</taxon>
        <taxon>Pseudomonadota</taxon>
        <taxon>Gammaproteobacteria</taxon>
        <taxon>Enterobacterales</taxon>
        <taxon>Enterobacteriaceae</taxon>
        <taxon>Shigella</taxon>
    </lineage>
</organism>
<gene>
    <name evidence="1" type="primary">yeeN</name>
    <name type="ordered locus">SSON_2046</name>
</gene>